<comment type="function">
    <text evidence="3">Quinone reductase that provides resistance to thiol-specific stress caused by electrophilic quinones (PubMed:24915188). Shows a preference for naphthoquinones such as plumbagin (PubMed:24915188).</text>
</comment>
<comment type="function">
    <text evidence="2">Also exhibits azoreductase activity. Catalyzes the reductive cleavage of the azo bond in aromatic azo compounds to the corresponding amines (PubMed:20417637). Preferred substrates are methyl red, amaranth and p-aminoazobenzene sulfonamide (PAABSA) (PubMed:20417637).</text>
</comment>
<comment type="catalytic activity">
    <reaction evidence="1 3">
        <text>2 a quinone + NADH + H(+) = 2 a 1,4-benzosemiquinone + NAD(+)</text>
        <dbReference type="Rhea" id="RHEA:65952"/>
        <dbReference type="ChEBI" id="CHEBI:15378"/>
        <dbReference type="ChEBI" id="CHEBI:57540"/>
        <dbReference type="ChEBI" id="CHEBI:57945"/>
        <dbReference type="ChEBI" id="CHEBI:132124"/>
        <dbReference type="ChEBI" id="CHEBI:134225"/>
    </reaction>
    <physiologicalReaction direction="left-to-right" evidence="3">
        <dbReference type="Rhea" id="RHEA:65953"/>
    </physiologicalReaction>
</comment>
<comment type="catalytic activity">
    <reaction evidence="1 2">
        <text>N,N-dimethyl-1,4-phenylenediamine + anthranilate + 2 NAD(+) = 2-(4-dimethylaminophenyl)diazenylbenzoate + 2 NADH + 2 H(+)</text>
        <dbReference type="Rhea" id="RHEA:55872"/>
        <dbReference type="ChEBI" id="CHEBI:15378"/>
        <dbReference type="ChEBI" id="CHEBI:15783"/>
        <dbReference type="ChEBI" id="CHEBI:16567"/>
        <dbReference type="ChEBI" id="CHEBI:57540"/>
        <dbReference type="ChEBI" id="CHEBI:57945"/>
        <dbReference type="ChEBI" id="CHEBI:71579"/>
        <dbReference type="EC" id="1.7.1.17"/>
    </reaction>
    <physiologicalReaction direction="right-to-left" evidence="2">
        <dbReference type="Rhea" id="RHEA:55874"/>
    </physiologicalReaction>
</comment>
<comment type="cofactor">
    <cofactor evidence="1">
        <name>FMN</name>
        <dbReference type="ChEBI" id="CHEBI:58210"/>
    </cofactor>
    <text evidence="1">Binds 1 FMN per subunit.</text>
</comment>
<comment type="subunit">
    <text evidence="1">Homodimer.</text>
</comment>
<comment type="miscellaneous">
    <text evidence="3">Rate of quinone reduction is higher than reduction of azo substrates, suggesting the enzyme is better suited for carrying out quinone rather than azo reduction.</text>
</comment>
<comment type="similarity">
    <text evidence="1">Belongs to the azoreductase type 1 family.</text>
</comment>
<feature type="chain" id="PRO_0000166349" description="FMN-dependent NADH:quinone oxidoreductase 3">
    <location>
        <begin position="1"/>
        <end position="213"/>
    </location>
</feature>
<feature type="binding site" evidence="1">
    <location>
        <position position="10"/>
    </location>
    <ligand>
        <name>FMN</name>
        <dbReference type="ChEBI" id="CHEBI:58210"/>
    </ligand>
</feature>
<feature type="binding site" evidence="1">
    <location>
        <begin position="16"/>
        <end position="18"/>
    </location>
    <ligand>
        <name>FMN</name>
        <dbReference type="ChEBI" id="CHEBI:58210"/>
    </ligand>
</feature>
<feature type="binding site" evidence="1">
    <location>
        <begin position="96"/>
        <end position="99"/>
    </location>
    <ligand>
        <name>FMN</name>
        <dbReference type="ChEBI" id="CHEBI:58210"/>
    </ligand>
</feature>
<dbReference type="EC" id="1.6.5.-" evidence="1 3"/>
<dbReference type="EC" id="1.7.1.17" evidence="1 2"/>
<dbReference type="EMBL" id="AE004091">
    <property type="protein sequence ID" value="AAG06611.1"/>
    <property type="molecule type" value="Genomic_DNA"/>
</dbReference>
<dbReference type="PIR" id="C83243">
    <property type="entry name" value="C83243"/>
</dbReference>
<dbReference type="RefSeq" id="NP_251913.1">
    <property type="nucleotide sequence ID" value="NC_002516.2"/>
</dbReference>
<dbReference type="RefSeq" id="WP_003114814.1">
    <property type="nucleotide sequence ID" value="NZ_QZGE01000019.1"/>
</dbReference>
<dbReference type="SMR" id="Q9HZ17"/>
<dbReference type="FunCoup" id="Q9HZ17">
    <property type="interactions" value="87"/>
</dbReference>
<dbReference type="STRING" id="208964.PA3223"/>
<dbReference type="PaxDb" id="208964-PA3223"/>
<dbReference type="DNASU" id="882554"/>
<dbReference type="GeneID" id="882554"/>
<dbReference type="KEGG" id="pae:PA3223"/>
<dbReference type="PATRIC" id="fig|208964.12.peg.3370"/>
<dbReference type="PseudoCAP" id="PA3223"/>
<dbReference type="HOGENOM" id="CLU_088964_0_0_6"/>
<dbReference type="InParanoid" id="Q9HZ17"/>
<dbReference type="OrthoDB" id="9787136at2"/>
<dbReference type="PhylomeDB" id="Q9HZ17"/>
<dbReference type="BioCyc" id="PAER208964:G1FZ6-3282-MONOMER"/>
<dbReference type="Proteomes" id="UP000002438">
    <property type="component" value="Chromosome"/>
</dbReference>
<dbReference type="GO" id="GO:0009055">
    <property type="term" value="F:electron transfer activity"/>
    <property type="evidence" value="ECO:0007669"/>
    <property type="project" value="UniProtKB-UniRule"/>
</dbReference>
<dbReference type="GO" id="GO:0010181">
    <property type="term" value="F:FMN binding"/>
    <property type="evidence" value="ECO:0007669"/>
    <property type="project" value="UniProtKB-UniRule"/>
</dbReference>
<dbReference type="GO" id="GO:0016652">
    <property type="term" value="F:oxidoreductase activity, acting on NAD(P)H as acceptor"/>
    <property type="evidence" value="ECO:0007669"/>
    <property type="project" value="UniProtKB-UniRule"/>
</dbReference>
<dbReference type="GO" id="GO:0016655">
    <property type="term" value="F:oxidoreductase activity, acting on NAD(P)H, quinone or similar compound as acceptor"/>
    <property type="evidence" value="ECO:0000314"/>
    <property type="project" value="PseudoCAP"/>
</dbReference>
<dbReference type="Gene3D" id="3.40.50.360">
    <property type="match status" value="1"/>
</dbReference>
<dbReference type="HAMAP" id="MF_01216">
    <property type="entry name" value="Azoreductase_type1"/>
    <property type="match status" value="1"/>
</dbReference>
<dbReference type="InterPro" id="IPR003680">
    <property type="entry name" value="Flavodoxin_fold"/>
</dbReference>
<dbReference type="InterPro" id="IPR029039">
    <property type="entry name" value="Flavoprotein-like_sf"/>
</dbReference>
<dbReference type="InterPro" id="IPR050104">
    <property type="entry name" value="FMN-dep_NADH:Q_OxRdtase_AzoR1"/>
</dbReference>
<dbReference type="InterPro" id="IPR023048">
    <property type="entry name" value="NADH:quinone_OxRdtase_FMN_depd"/>
</dbReference>
<dbReference type="PANTHER" id="PTHR43741">
    <property type="entry name" value="FMN-DEPENDENT NADH-AZOREDUCTASE 1"/>
    <property type="match status" value="1"/>
</dbReference>
<dbReference type="PANTHER" id="PTHR43741:SF2">
    <property type="entry name" value="FMN-DEPENDENT NADH:QUINONE OXIDOREDUCTASE"/>
    <property type="match status" value="1"/>
</dbReference>
<dbReference type="Pfam" id="PF02525">
    <property type="entry name" value="Flavodoxin_2"/>
    <property type="match status" value="1"/>
</dbReference>
<dbReference type="SUPFAM" id="SSF52218">
    <property type="entry name" value="Flavoproteins"/>
    <property type="match status" value="1"/>
</dbReference>
<keyword id="KW-0285">Flavoprotein</keyword>
<keyword id="KW-0288">FMN</keyword>
<keyword id="KW-0520">NAD</keyword>
<keyword id="KW-0560">Oxidoreductase</keyword>
<keyword id="KW-1185">Reference proteome</keyword>
<sequence length="213" mass="23898">MSRVLVIESSARQRGSVSRLLTAEFISHWKIAHPADRFQVRDLAREPLPHLDELLLGAWTTPCDGHSAAERRALERSNRLTEELRMADVLVLAAPMYNFAIPSSLKSWFDHVLRAGLTFRYAEQGPEGLLQGKRAFVLTARGGIYAGGGLDHQEPYLRQVLGFVGIHDVTFIHAEGMNMGPEFREKGLARARERMRQALETDTSLCVPLPTLR</sequence>
<protein>
    <recommendedName>
        <fullName evidence="1">FMN-dependent NADH:quinone oxidoreductase 3</fullName>
        <ecNumber evidence="1 3">1.6.5.-</ecNumber>
    </recommendedName>
    <alternativeName>
        <fullName evidence="1">Azo-dye reductase 3</fullName>
    </alternativeName>
    <alternativeName>
        <fullName evidence="1">FMN-dependent NADH-azo compound oxidoreductase 3</fullName>
    </alternativeName>
    <alternativeName>
        <fullName evidence="1">FMN-dependent NADH-azoreductase 3</fullName>
        <ecNumber evidence="1 2">1.7.1.17</ecNumber>
    </alternativeName>
</protein>
<gene>
    <name evidence="1 4" type="primary">azoR3</name>
    <name type="ordered locus">PA3223</name>
</gene>
<organism>
    <name type="scientific">Pseudomonas aeruginosa (strain ATCC 15692 / DSM 22644 / CIP 104116 / JCM 14847 / LMG 12228 / 1C / PRS 101 / PAO1)</name>
    <dbReference type="NCBI Taxonomy" id="208964"/>
    <lineage>
        <taxon>Bacteria</taxon>
        <taxon>Pseudomonadati</taxon>
        <taxon>Pseudomonadota</taxon>
        <taxon>Gammaproteobacteria</taxon>
        <taxon>Pseudomonadales</taxon>
        <taxon>Pseudomonadaceae</taxon>
        <taxon>Pseudomonas</taxon>
    </lineage>
</organism>
<proteinExistence type="evidence at protein level"/>
<evidence type="ECO:0000255" key="1">
    <source>
        <dbReference type="HAMAP-Rule" id="MF_01216"/>
    </source>
</evidence>
<evidence type="ECO:0000269" key="2">
    <source>
    </source>
</evidence>
<evidence type="ECO:0000269" key="3">
    <source>
    </source>
</evidence>
<evidence type="ECO:0000303" key="4">
    <source>
    </source>
</evidence>
<reference key="1">
    <citation type="journal article" date="2000" name="Nature">
        <title>Complete genome sequence of Pseudomonas aeruginosa PAO1, an opportunistic pathogen.</title>
        <authorList>
            <person name="Stover C.K."/>
            <person name="Pham X.-Q.T."/>
            <person name="Erwin A.L."/>
            <person name="Mizoguchi S.D."/>
            <person name="Warrener P."/>
            <person name="Hickey M.J."/>
            <person name="Brinkman F.S.L."/>
            <person name="Hufnagle W.O."/>
            <person name="Kowalik D.J."/>
            <person name="Lagrou M."/>
            <person name="Garber R.L."/>
            <person name="Goltry L."/>
            <person name="Tolentino E."/>
            <person name="Westbrock-Wadman S."/>
            <person name="Yuan Y."/>
            <person name="Brody L.L."/>
            <person name="Coulter S.N."/>
            <person name="Folger K.R."/>
            <person name="Kas A."/>
            <person name="Larbig K."/>
            <person name="Lim R.M."/>
            <person name="Smith K.A."/>
            <person name="Spencer D.H."/>
            <person name="Wong G.K.-S."/>
            <person name="Wu Z."/>
            <person name="Paulsen I.T."/>
            <person name="Reizer J."/>
            <person name="Saier M.H. Jr."/>
            <person name="Hancock R.E.W."/>
            <person name="Lory S."/>
            <person name="Olson M.V."/>
        </authorList>
    </citation>
    <scope>NUCLEOTIDE SEQUENCE [LARGE SCALE GENOMIC DNA]</scope>
    <source>
        <strain>ATCC 15692 / DSM 22644 / CIP 104116 / JCM 14847 / LMG 12228 / 1C / PRS 101 / PAO1</strain>
    </source>
</reference>
<reference key="2">
    <citation type="journal article" date="2010" name="J. Mol. Biol.">
        <title>A novel mechanism for azoreduction.</title>
        <authorList>
            <person name="Ryan A."/>
            <person name="Laurieri N."/>
            <person name="Westwood I."/>
            <person name="Wang C.J."/>
            <person name="Lowe E."/>
            <person name="Sim E."/>
        </authorList>
    </citation>
    <scope>FUNCTION</scope>
    <scope>CATALYTIC ACTIVITY</scope>
    <source>
        <strain>ATCC 15692 / DSM 22644 / CIP 104116 / JCM 14847 / LMG 12228 / 1C / PRS 101 / PAO1</strain>
    </source>
</reference>
<reference key="3">
    <citation type="journal article" date="2014" name="PLoS ONE">
        <title>Identification of NAD(P)H quinone oxidoreductase activity in azoreductases from P. aeruginosa: azoreductases and NAD(P)H quinone oxidoreductases belong to the same FMN-dependent superfamily of enzymes.</title>
        <authorList>
            <person name="Ryan A."/>
            <person name="Kaplan E."/>
            <person name="Nebel J.C."/>
            <person name="Polycarpou E."/>
            <person name="Crescente V."/>
            <person name="Lowe E."/>
            <person name="Preston G.M."/>
            <person name="Sim E."/>
        </authorList>
    </citation>
    <scope>FUNCTION</scope>
    <scope>CATALYTIC ACTIVITY</scope>
</reference>
<accession>Q9HZ17</accession>
<name>AZOR3_PSEAE</name>